<proteinExistence type="evidence at transcript level"/>
<protein>
    <recommendedName>
        <fullName>Centromere protein H</fullName>
        <shortName>CENP-H</shortName>
    </recommendedName>
</protein>
<comment type="function">
    <text evidence="1">Component of the CENPA-NAC (nucleosome-associated) complex, a complex that plays a central role in assembly of kinetochore proteins, mitotic progression and chromosome segregation. The CENPA-NAC complex recruits the CENPA-CAD (nucleosome distal) complex and may be involved in incorporation of newly synthesized CENPA into centromeres (By similarity).</text>
</comment>
<comment type="subunit">
    <text evidence="1">Self-associates. Component of the CENPA-NAC complex, at least composed of CENPA, CENPC, CENPH, CENPM, CENPN, CENPT and CENPU. The CENPA-NAC complex interacts with the CENPA-CAD complex, composed of CENPI, CENPK, CENPL, CENPO, CENPP, CENPQ, CENPR and CENPS. Interacts with KIF2C and NDC80 (By similarity).</text>
</comment>
<comment type="subcellular location">
    <subcellularLocation>
        <location>Nucleus</location>
    </subcellularLocation>
    <subcellularLocation>
        <location evidence="1">Chromosome</location>
        <location evidence="1">Centromere</location>
        <location evidence="1">Kinetochore</location>
    </subcellularLocation>
    <text evidence="1">Associates with active centromere-kinetochore complexes throughout the cell cycle. Colocalizes with inner kinetochore plate proteins CENPA and CENPC during both interphase and metaphase (By similarity).</text>
</comment>
<comment type="similarity">
    <text evidence="3">Belongs to the CENP-H/MCM16 family.</text>
</comment>
<sequence length="244" mass="28064">METQSEEQAVTKPADSGGEGGPPQVAGAQAARPEDRMTLLLRLRAQTKQQLLEYKSMVDANEEKTPEQIMQEKQIEAKIEELENEVEEAKTAFEMKKLALDRMQLSTALKKHLEKVDIKTSVLMDNMKQILNLNKLIMKSQQETWDLEEKLLDVRKKRLQLKQASERKLLEIQTEKNKQKDDLDSMENSDKIKAIQQNLETEIQITTVIQHVFQNLILGSKVNWAEDPALKETVLQLEKNLTMI</sequence>
<evidence type="ECO:0000250" key="1"/>
<evidence type="ECO:0000250" key="2">
    <source>
        <dbReference type="UniProtKB" id="Q9H3R5"/>
    </source>
</evidence>
<evidence type="ECO:0000255" key="3"/>
<evidence type="ECO:0000256" key="4">
    <source>
        <dbReference type="SAM" id="MobiDB-lite"/>
    </source>
</evidence>
<feature type="chain" id="PRO_0000240135" description="Centromere protein H">
    <location>
        <begin position="1"/>
        <end position="244"/>
    </location>
</feature>
<feature type="region of interest" description="Disordered" evidence="4">
    <location>
        <begin position="1"/>
        <end position="33"/>
    </location>
</feature>
<feature type="coiled-coil region" evidence="3">
    <location>
        <begin position="66"/>
        <end position="104"/>
    </location>
</feature>
<feature type="coiled-coil region" evidence="3">
    <location>
        <begin position="146"/>
        <end position="189"/>
    </location>
</feature>
<feature type="compositionally biased region" description="Low complexity" evidence="4">
    <location>
        <begin position="22"/>
        <end position="31"/>
    </location>
</feature>
<feature type="modified residue" description="N-acetylmethionine" evidence="2">
    <location>
        <position position="1"/>
    </location>
</feature>
<feature type="modified residue" description="Phosphoserine" evidence="2">
    <location>
        <position position="16"/>
    </location>
</feature>
<feature type="modified residue" description="Phosphothreonine" evidence="2">
    <location>
        <position position="65"/>
    </location>
</feature>
<feature type="cross-link" description="Glycyl lysine isopeptide (Lys-Gly) (interchain with G-Cter in SUMO2)" evidence="2">
    <location>
        <position position="64"/>
    </location>
</feature>
<gene>
    <name type="primary">CENPH</name>
</gene>
<keyword id="KW-0007">Acetylation</keyword>
<keyword id="KW-0137">Centromere</keyword>
<keyword id="KW-0158">Chromosome</keyword>
<keyword id="KW-0175">Coiled coil</keyword>
<keyword id="KW-1017">Isopeptide bond</keyword>
<keyword id="KW-0995">Kinetochore</keyword>
<keyword id="KW-0539">Nucleus</keyword>
<keyword id="KW-0597">Phosphoprotein</keyword>
<keyword id="KW-1185">Reference proteome</keyword>
<keyword id="KW-0832">Ubl conjugation</keyword>
<organism>
    <name type="scientific">Bos taurus</name>
    <name type="common">Bovine</name>
    <dbReference type="NCBI Taxonomy" id="9913"/>
    <lineage>
        <taxon>Eukaryota</taxon>
        <taxon>Metazoa</taxon>
        <taxon>Chordata</taxon>
        <taxon>Craniata</taxon>
        <taxon>Vertebrata</taxon>
        <taxon>Euteleostomi</taxon>
        <taxon>Mammalia</taxon>
        <taxon>Eutheria</taxon>
        <taxon>Laurasiatheria</taxon>
        <taxon>Artiodactyla</taxon>
        <taxon>Ruminantia</taxon>
        <taxon>Pecora</taxon>
        <taxon>Bovidae</taxon>
        <taxon>Bovinae</taxon>
        <taxon>Bos</taxon>
    </lineage>
</organism>
<dbReference type="EMBL" id="BC102350">
    <property type="protein sequence ID" value="AAI02351.1"/>
    <property type="molecule type" value="mRNA"/>
</dbReference>
<dbReference type="RefSeq" id="NP_001029408.1">
    <property type="nucleotide sequence ID" value="NM_001034236.2"/>
</dbReference>
<dbReference type="SMR" id="Q3T0L1"/>
<dbReference type="FunCoup" id="Q3T0L1">
    <property type="interactions" value="581"/>
</dbReference>
<dbReference type="STRING" id="9913.ENSBTAP00000036669"/>
<dbReference type="PaxDb" id="9913-ENSBTAP00000036669"/>
<dbReference type="GeneID" id="505284"/>
<dbReference type="KEGG" id="bta:505284"/>
<dbReference type="CTD" id="64946"/>
<dbReference type="VEuPathDB" id="HostDB:ENSBTAG00000014246"/>
<dbReference type="eggNOG" id="ENOG502S0VG">
    <property type="taxonomic scope" value="Eukaryota"/>
</dbReference>
<dbReference type="HOGENOM" id="CLU_097390_0_0_1"/>
<dbReference type="InParanoid" id="Q3T0L1"/>
<dbReference type="OMA" id="KSHQESW"/>
<dbReference type="OrthoDB" id="2274804at2759"/>
<dbReference type="TreeFam" id="TF101134"/>
<dbReference type="Reactome" id="R-BTA-141444">
    <property type="pathway name" value="Amplification of signal from unattached kinetochores via a MAD2 inhibitory signal"/>
</dbReference>
<dbReference type="Reactome" id="R-BTA-2467813">
    <property type="pathway name" value="Separation of Sister Chromatids"/>
</dbReference>
<dbReference type="Reactome" id="R-BTA-2500257">
    <property type="pathway name" value="Resolution of Sister Chromatid Cohesion"/>
</dbReference>
<dbReference type="Reactome" id="R-BTA-5663220">
    <property type="pathway name" value="RHO GTPases Activate Formins"/>
</dbReference>
<dbReference type="Reactome" id="R-BTA-606279">
    <property type="pathway name" value="Deposition of new CENPA-containing nucleosomes at the centromere"/>
</dbReference>
<dbReference type="Reactome" id="R-BTA-68877">
    <property type="pathway name" value="Mitotic Prometaphase"/>
</dbReference>
<dbReference type="Reactome" id="R-BTA-9648025">
    <property type="pathway name" value="EML4 and NUDC in mitotic spindle formation"/>
</dbReference>
<dbReference type="Proteomes" id="UP000009136">
    <property type="component" value="Chromosome 20"/>
</dbReference>
<dbReference type="Bgee" id="ENSBTAG00000014246">
    <property type="expression patterns" value="Expressed in oocyte and 97 other cell types or tissues"/>
</dbReference>
<dbReference type="GO" id="GO:0000776">
    <property type="term" value="C:kinetochore"/>
    <property type="evidence" value="ECO:0000250"/>
    <property type="project" value="UniProtKB"/>
</dbReference>
<dbReference type="GO" id="GO:0005634">
    <property type="term" value="C:nucleus"/>
    <property type="evidence" value="ECO:0000318"/>
    <property type="project" value="GO_Central"/>
</dbReference>
<dbReference type="GO" id="GO:0043515">
    <property type="term" value="F:kinetochore binding"/>
    <property type="evidence" value="ECO:0000318"/>
    <property type="project" value="GO_Central"/>
</dbReference>
<dbReference type="GO" id="GO:0007059">
    <property type="term" value="P:chromosome segregation"/>
    <property type="evidence" value="ECO:0000318"/>
    <property type="project" value="GO_Central"/>
</dbReference>
<dbReference type="GO" id="GO:0051382">
    <property type="term" value="P:kinetochore assembly"/>
    <property type="evidence" value="ECO:0007669"/>
    <property type="project" value="InterPro"/>
</dbReference>
<dbReference type="GO" id="GO:0007052">
    <property type="term" value="P:mitotic spindle organization"/>
    <property type="evidence" value="ECO:0000318"/>
    <property type="project" value="GO_Central"/>
</dbReference>
<dbReference type="InterPro" id="IPR040034">
    <property type="entry name" value="CENP-H"/>
</dbReference>
<dbReference type="InterPro" id="IPR008426">
    <property type="entry name" value="CENP-H_C"/>
</dbReference>
<dbReference type="PANTHER" id="PTHR48122">
    <property type="entry name" value="CENTROMERE PROTEIN H"/>
    <property type="match status" value="1"/>
</dbReference>
<dbReference type="PANTHER" id="PTHR48122:SF1">
    <property type="entry name" value="CENTROMERE PROTEIN H"/>
    <property type="match status" value="1"/>
</dbReference>
<dbReference type="Pfam" id="PF05837">
    <property type="entry name" value="CENP-H"/>
    <property type="match status" value="1"/>
</dbReference>
<accession>Q3T0L1</accession>
<name>CENPH_BOVIN</name>
<reference key="1">
    <citation type="submission" date="2005-08" db="EMBL/GenBank/DDBJ databases">
        <authorList>
            <consortium name="NIH - Mammalian Gene Collection (MGC) project"/>
        </authorList>
    </citation>
    <scope>NUCLEOTIDE SEQUENCE [LARGE SCALE MRNA]</scope>
    <source>
        <strain>Crossbred X Angus</strain>
        <tissue>Ileum</tissue>
    </source>
</reference>